<proteinExistence type="inferred from homology"/>
<dbReference type="EC" id="2.7.7.6" evidence="1"/>
<dbReference type="EMBL" id="CP000783">
    <property type="protein sequence ID" value="ABU75340.1"/>
    <property type="molecule type" value="Genomic_DNA"/>
</dbReference>
<dbReference type="RefSeq" id="WP_004388623.1">
    <property type="nucleotide sequence ID" value="NC_009778.1"/>
</dbReference>
<dbReference type="SMR" id="A7MPF8"/>
<dbReference type="GeneID" id="92804615"/>
<dbReference type="KEGG" id="esa:ESA_00031"/>
<dbReference type="HOGENOM" id="CLU_053084_0_0_6"/>
<dbReference type="Proteomes" id="UP000000260">
    <property type="component" value="Chromosome"/>
</dbReference>
<dbReference type="GO" id="GO:0005737">
    <property type="term" value="C:cytoplasm"/>
    <property type="evidence" value="ECO:0007669"/>
    <property type="project" value="UniProtKB-ARBA"/>
</dbReference>
<dbReference type="GO" id="GO:0000428">
    <property type="term" value="C:DNA-directed RNA polymerase complex"/>
    <property type="evidence" value="ECO:0007669"/>
    <property type="project" value="UniProtKB-KW"/>
</dbReference>
<dbReference type="GO" id="GO:0003677">
    <property type="term" value="F:DNA binding"/>
    <property type="evidence" value="ECO:0007669"/>
    <property type="project" value="UniProtKB-UniRule"/>
</dbReference>
<dbReference type="GO" id="GO:0003899">
    <property type="term" value="F:DNA-directed RNA polymerase activity"/>
    <property type="evidence" value="ECO:0007669"/>
    <property type="project" value="UniProtKB-UniRule"/>
</dbReference>
<dbReference type="GO" id="GO:0046983">
    <property type="term" value="F:protein dimerization activity"/>
    <property type="evidence" value="ECO:0007669"/>
    <property type="project" value="InterPro"/>
</dbReference>
<dbReference type="GO" id="GO:0006351">
    <property type="term" value="P:DNA-templated transcription"/>
    <property type="evidence" value="ECO:0007669"/>
    <property type="project" value="UniProtKB-UniRule"/>
</dbReference>
<dbReference type="CDD" id="cd06928">
    <property type="entry name" value="RNAP_alpha_NTD"/>
    <property type="match status" value="1"/>
</dbReference>
<dbReference type="FunFam" id="1.10.150.20:FF:000001">
    <property type="entry name" value="DNA-directed RNA polymerase subunit alpha"/>
    <property type="match status" value="1"/>
</dbReference>
<dbReference type="FunFam" id="2.170.120.12:FF:000001">
    <property type="entry name" value="DNA-directed RNA polymerase subunit alpha"/>
    <property type="match status" value="1"/>
</dbReference>
<dbReference type="Gene3D" id="1.10.150.20">
    <property type="entry name" value="5' to 3' exonuclease, C-terminal subdomain"/>
    <property type="match status" value="1"/>
</dbReference>
<dbReference type="Gene3D" id="2.170.120.12">
    <property type="entry name" value="DNA-directed RNA polymerase, insert domain"/>
    <property type="match status" value="1"/>
</dbReference>
<dbReference type="Gene3D" id="3.30.1360.10">
    <property type="entry name" value="RNA polymerase, RBP11-like subunit"/>
    <property type="match status" value="1"/>
</dbReference>
<dbReference type="HAMAP" id="MF_00059">
    <property type="entry name" value="RNApol_bact_RpoA"/>
    <property type="match status" value="1"/>
</dbReference>
<dbReference type="InterPro" id="IPR011262">
    <property type="entry name" value="DNA-dir_RNA_pol_insert"/>
</dbReference>
<dbReference type="InterPro" id="IPR011263">
    <property type="entry name" value="DNA-dir_RNA_pol_RpoA/D/Rpb3"/>
</dbReference>
<dbReference type="InterPro" id="IPR011773">
    <property type="entry name" value="DNA-dir_RpoA"/>
</dbReference>
<dbReference type="InterPro" id="IPR036603">
    <property type="entry name" value="RBP11-like"/>
</dbReference>
<dbReference type="InterPro" id="IPR011260">
    <property type="entry name" value="RNAP_asu_C"/>
</dbReference>
<dbReference type="InterPro" id="IPR036643">
    <property type="entry name" value="RNApol_insert_sf"/>
</dbReference>
<dbReference type="NCBIfam" id="NF003513">
    <property type="entry name" value="PRK05182.1-2"/>
    <property type="match status" value="1"/>
</dbReference>
<dbReference type="NCBIfam" id="NF003519">
    <property type="entry name" value="PRK05182.2-5"/>
    <property type="match status" value="1"/>
</dbReference>
<dbReference type="NCBIfam" id="TIGR02027">
    <property type="entry name" value="rpoA"/>
    <property type="match status" value="1"/>
</dbReference>
<dbReference type="Pfam" id="PF01000">
    <property type="entry name" value="RNA_pol_A_bac"/>
    <property type="match status" value="1"/>
</dbReference>
<dbReference type="Pfam" id="PF03118">
    <property type="entry name" value="RNA_pol_A_CTD"/>
    <property type="match status" value="1"/>
</dbReference>
<dbReference type="Pfam" id="PF01193">
    <property type="entry name" value="RNA_pol_L"/>
    <property type="match status" value="1"/>
</dbReference>
<dbReference type="SMART" id="SM00662">
    <property type="entry name" value="RPOLD"/>
    <property type="match status" value="1"/>
</dbReference>
<dbReference type="SUPFAM" id="SSF47789">
    <property type="entry name" value="C-terminal domain of RNA polymerase alpha subunit"/>
    <property type="match status" value="1"/>
</dbReference>
<dbReference type="SUPFAM" id="SSF56553">
    <property type="entry name" value="Insert subdomain of RNA polymerase alpha subunit"/>
    <property type="match status" value="1"/>
</dbReference>
<dbReference type="SUPFAM" id="SSF55257">
    <property type="entry name" value="RBP11-like subunits of RNA polymerase"/>
    <property type="match status" value="1"/>
</dbReference>
<reference key="1">
    <citation type="journal article" date="2010" name="PLoS ONE">
        <title>Genome sequence of Cronobacter sakazakii BAA-894 and comparative genomic hybridization analysis with other Cronobacter species.</title>
        <authorList>
            <person name="Kucerova E."/>
            <person name="Clifton S.W."/>
            <person name="Xia X.Q."/>
            <person name="Long F."/>
            <person name="Porwollik S."/>
            <person name="Fulton L."/>
            <person name="Fronick C."/>
            <person name="Minx P."/>
            <person name="Kyung K."/>
            <person name="Warren W."/>
            <person name="Fulton R."/>
            <person name="Feng D."/>
            <person name="Wollam A."/>
            <person name="Shah N."/>
            <person name="Bhonagiri V."/>
            <person name="Nash W.E."/>
            <person name="Hallsworth-Pepin K."/>
            <person name="Wilson R.K."/>
            <person name="McClelland M."/>
            <person name="Forsythe S.J."/>
        </authorList>
    </citation>
    <scope>NUCLEOTIDE SEQUENCE [LARGE SCALE GENOMIC DNA]</scope>
    <source>
        <strain>ATCC BAA-894</strain>
    </source>
</reference>
<protein>
    <recommendedName>
        <fullName evidence="1">DNA-directed RNA polymerase subunit alpha</fullName>
        <shortName evidence="1">RNAP subunit alpha</shortName>
        <ecNumber evidence="1">2.7.7.6</ecNumber>
    </recommendedName>
    <alternativeName>
        <fullName evidence="1">RNA polymerase subunit alpha</fullName>
    </alternativeName>
    <alternativeName>
        <fullName evidence="1">Transcriptase subunit alpha</fullName>
    </alternativeName>
</protein>
<name>RPOA_CROS8</name>
<evidence type="ECO:0000255" key="1">
    <source>
        <dbReference type="HAMAP-Rule" id="MF_00059"/>
    </source>
</evidence>
<comment type="function">
    <text evidence="1">DNA-dependent RNA polymerase catalyzes the transcription of DNA into RNA using the four ribonucleoside triphosphates as substrates.</text>
</comment>
<comment type="catalytic activity">
    <reaction evidence="1">
        <text>RNA(n) + a ribonucleoside 5'-triphosphate = RNA(n+1) + diphosphate</text>
        <dbReference type="Rhea" id="RHEA:21248"/>
        <dbReference type="Rhea" id="RHEA-COMP:14527"/>
        <dbReference type="Rhea" id="RHEA-COMP:17342"/>
        <dbReference type="ChEBI" id="CHEBI:33019"/>
        <dbReference type="ChEBI" id="CHEBI:61557"/>
        <dbReference type="ChEBI" id="CHEBI:140395"/>
        <dbReference type="EC" id="2.7.7.6"/>
    </reaction>
</comment>
<comment type="subunit">
    <text evidence="1">Homodimer. The RNAP catalytic core consists of 2 alpha, 1 beta, 1 beta' and 1 omega subunit. When a sigma factor is associated with the core the holoenzyme is formed, which can initiate transcription.</text>
</comment>
<comment type="domain">
    <text evidence="1">The N-terminal domain is essential for RNAP assembly and basal transcription, whereas the C-terminal domain is involved in interaction with transcriptional regulators and with upstream promoter elements.</text>
</comment>
<comment type="similarity">
    <text evidence="1">Belongs to the RNA polymerase alpha chain family.</text>
</comment>
<gene>
    <name evidence="1" type="primary">rpoA</name>
    <name type="ordered locus">ESA_00031</name>
</gene>
<sequence>MQGSVTEFLKPRLVDIEQVSSTHAKVTLEPLERGFGHTLGNALRRILLSSMPGCAVTEVEIDGVLHEYSTKEGVQEDILEILLNLKGLAVRVQGKDEVVLTLNKSGIGPVTAADITHDGDVEIVKPQHVICHLTDENASISMRIKVQRGRGYVPASARIHSEEDERPIGRLLVDACYSPVERIAYNVEAARVEQRTDLDKLVIEMETNGTIDPEEAIRRAATILAEQLEAFVDLRDVRQPEVKEEKPEFDPILLRPVDDLELTVRSANCLKAEAIHYIGDLVQRTEVELLKTPNLGKKSLTEIKDVLASRGLSLGMRLENWPPASIADE</sequence>
<organism>
    <name type="scientific">Cronobacter sakazakii (strain ATCC BAA-894)</name>
    <name type="common">Enterobacter sakazakii</name>
    <dbReference type="NCBI Taxonomy" id="290339"/>
    <lineage>
        <taxon>Bacteria</taxon>
        <taxon>Pseudomonadati</taxon>
        <taxon>Pseudomonadota</taxon>
        <taxon>Gammaproteobacteria</taxon>
        <taxon>Enterobacterales</taxon>
        <taxon>Enterobacteriaceae</taxon>
        <taxon>Cronobacter</taxon>
    </lineage>
</organism>
<feature type="chain" id="PRO_0000323628" description="DNA-directed RNA polymerase subunit alpha">
    <location>
        <begin position="1"/>
        <end position="329"/>
    </location>
</feature>
<feature type="region of interest" description="Alpha N-terminal domain (alpha-NTD)" evidence="1">
    <location>
        <begin position="1"/>
        <end position="235"/>
    </location>
</feature>
<feature type="region of interest" description="Alpha C-terminal domain (alpha-CTD)" evidence="1">
    <location>
        <begin position="249"/>
        <end position="329"/>
    </location>
</feature>
<keyword id="KW-0240">DNA-directed RNA polymerase</keyword>
<keyword id="KW-0548">Nucleotidyltransferase</keyword>
<keyword id="KW-1185">Reference proteome</keyword>
<keyword id="KW-0804">Transcription</keyword>
<keyword id="KW-0808">Transferase</keyword>
<accession>A7MPF8</accession>